<evidence type="ECO:0000250" key="1"/>
<evidence type="ECO:0000256" key="2">
    <source>
        <dbReference type="SAM" id="MobiDB-lite"/>
    </source>
</evidence>
<evidence type="ECO:0000305" key="3"/>
<sequence length="330" mass="37632">MDRPYDETVDIPDSEDIATPRLQQSLAENLDKLRDSYGDNSKLLTKTNSELANRSIKTASKSVIRMDSSSEKLCDRGSSDDDDDDDNDDDEDEDDDDDDENANIHDATEGVYNPADYEHLTVSSEIKEIFEYIQRYTPQTIELETKLKPFIPDYIPAVGDIDAFLKVPRPDGKPDYLGLLVLDEPCANQSDPTVLDLQLRALSKQTTTKQVTVKSLENAEHQTKAIENWIKSIADLYRTKPPPTVHYTKNMPEISQLMSEWPKSFEESISNMQLSLSQLDCSLKDYVDIICALLDIPVYNNRIHSLHLLFSLYLEFKNSQHFRQNESVIT</sequence>
<organism>
    <name type="scientific">Schistosoma japonicum</name>
    <name type="common">Blood fluke</name>
    <dbReference type="NCBI Taxonomy" id="6182"/>
    <lineage>
        <taxon>Eukaryota</taxon>
        <taxon>Metazoa</taxon>
        <taxon>Spiralia</taxon>
        <taxon>Lophotrochozoa</taxon>
        <taxon>Platyhelminthes</taxon>
        <taxon>Trematoda</taxon>
        <taxon>Digenea</taxon>
        <taxon>Strigeidida</taxon>
        <taxon>Schistosomatoidea</taxon>
        <taxon>Schistosomatidae</taxon>
        <taxon>Schistosoma</taxon>
    </lineage>
</organism>
<proteinExistence type="evidence at transcript level"/>
<name>IFT46_SCHJA</name>
<feature type="chain" id="PRO_0000085519" description="Intraflagellar transport protein 46 homolog">
    <location>
        <begin position="1"/>
        <end position="330"/>
    </location>
</feature>
<feature type="region of interest" description="Disordered" evidence="2">
    <location>
        <begin position="1"/>
        <end position="21"/>
    </location>
</feature>
<feature type="region of interest" description="Disordered" evidence="2">
    <location>
        <begin position="55"/>
        <end position="112"/>
    </location>
</feature>
<feature type="compositionally biased region" description="Acidic residues" evidence="2">
    <location>
        <begin position="7"/>
        <end position="16"/>
    </location>
</feature>
<feature type="compositionally biased region" description="Basic and acidic residues" evidence="2">
    <location>
        <begin position="68"/>
        <end position="79"/>
    </location>
</feature>
<feature type="compositionally biased region" description="Acidic residues" evidence="2">
    <location>
        <begin position="80"/>
        <end position="101"/>
    </location>
</feature>
<comment type="function">
    <text evidence="1">Forms part of a complex involved in intraflagellar transport (IFT), the bi-directional movement of particles required for the assembly, maintenance and functioning of primary cilia.</text>
</comment>
<comment type="subcellular location">
    <subcellularLocation>
        <location evidence="1">Cytoplasm</location>
        <location evidence="1">Cytoskeleton</location>
        <location evidence="1">Cilium basal body</location>
    </subcellularLocation>
    <subcellularLocation>
        <location evidence="1">Cell projection</location>
        <location evidence="1">Cilium</location>
    </subcellularLocation>
    <text evidence="1">Expression is concentrated at the cilium basal body but is also detected along the length of the cilium.</text>
</comment>
<comment type="similarity">
    <text evidence="3">Belongs to the IFT46 family.</text>
</comment>
<gene>
    <name type="ORF">SJCHGC08984</name>
</gene>
<protein>
    <recommendedName>
        <fullName>Intraflagellar transport protein 46 homolog</fullName>
    </recommendedName>
</protein>
<dbReference type="EMBL" id="AY812979">
    <property type="protein sequence ID" value="AAW24711.1"/>
    <property type="molecule type" value="mRNA"/>
</dbReference>
<dbReference type="SMR" id="Q5DHJ5"/>
<dbReference type="GO" id="GO:0005737">
    <property type="term" value="C:cytoplasm"/>
    <property type="evidence" value="ECO:0007669"/>
    <property type="project" value="UniProtKB-KW"/>
</dbReference>
<dbReference type="GO" id="GO:0030992">
    <property type="term" value="C:intraciliary transport particle B"/>
    <property type="evidence" value="ECO:0007669"/>
    <property type="project" value="TreeGrafter"/>
</dbReference>
<dbReference type="GO" id="GO:0005815">
    <property type="term" value="C:microtubule organizing center"/>
    <property type="evidence" value="ECO:0007669"/>
    <property type="project" value="TreeGrafter"/>
</dbReference>
<dbReference type="GO" id="GO:0031514">
    <property type="term" value="C:motile cilium"/>
    <property type="evidence" value="ECO:0007669"/>
    <property type="project" value="TreeGrafter"/>
</dbReference>
<dbReference type="GO" id="GO:0060271">
    <property type="term" value="P:cilium assembly"/>
    <property type="evidence" value="ECO:0007669"/>
    <property type="project" value="TreeGrafter"/>
</dbReference>
<dbReference type="GO" id="GO:0042073">
    <property type="term" value="P:intraciliary transport"/>
    <property type="evidence" value="ECO:0007669"/>
    <property type="project" value="InterPro"/>
</dbReference>
<dbReference type="InterPro" id="IPR022088">
    <property type="entry name" value="Intraflagellar_transp_cmplxB"/>
</dbReference>
<dbReference type="PANTHER" id="PTHR13376">
    <property type="entry name" value="INTRAFLAGELLAR TRANSPORT PROTEIN 46 HOMOLOG"/>
    <property type="match status" value="1"/>
</dbReference>
<dbReference type="PANTHER" id="PTHR13376:SF0">
    <property type="entry name" value="INTRAFLAGELLAR TRANSPORT PROTEIN 46 HOMOLOG"/>
    <property type="match status" value="1"/>
</dbReference>
<dbReference type="Pfam" id="PF12317">
    <property type="entry name" value="IFT46_B_C"/>
    <property type="match status" value="1"/>
</dbReference>
<accession>Q5DHJ5</accession>
<keyword id="KW-0966">Cell projection</keyword>
<keyword id="KW-0969">Cilium</keyword>
<keyword id="KW-0963">Cytoplasm</keyword>
<keyword id="KW-0206">Cytoskeleton</keyword>
<reference key="1">
    <citation type="journal article" date="2006" name="PLoS Pathog.">
        <title>New perspectives on host-parasite interplay by comparative transcriptomic and proteomic analyses of Schistosoma japonicum.</title>
        <authorList>
            <person name="Liu F."/>
            <person name="Lu J."/>
            <person name="Hu W."/>
            <person name="Wang S.-Y."/>
            <person name="Cui S.-J."/>
            <person name="Chi M."/>
            <person name="Yan Q."/>
            <person name="Wang X.-R."/>
            <person name="Song H.-D."/>
            <person name="Xu X.-N."/>
            <person name="Wang J.-J."/>
            <person name="Zhang X.-L."/>
            <person name="Zhang X."/>
            <person name="Wang Z.-Q."/>
            <person name="Xue C.-L."/>
            <person name="Brindley P.J."/>
            <person name="McManus D.P."/>
            <person name="Yang P.-Y."/>
            <person name="Feng Z."/>
            <person name="Chen Z."/>
            <person name="Han Z.-G."/>
        </authorList>
    </citation>
    <scope>NUCLEOTIDE SEQUENCE [LARGE SCALE MRNA]</scope>
</reference>